<keyword id="KW-0067">ATP-binding</keyword>
<keyword id="KW-0520">NAD</keyword>
<keyword id="KW-0547">Nucleotide-binding</keyword>
<keyword id="KW-0548">Nucleotidyltransferase</keyword>
<keyword id="KW-0662">Pyridine nucleotide biosynthesis</keyword>
<keyword id="KW-1185">Reference proteome</keyword>
<keyword id="KW-0808">Transferase</keyword>
<name>NADD_VESOH</name>
<sequence>MQKSLHSKLFKIIGFFGGSFDPIHYGHLKNAAQLKDKLRLSKLFLMPCDKPVHKKQLNFSINQRIDMLHLAIKEFNTLSIDTREIKQNKNSYTINSLKYIQSKYQNNSICLIMGMDSFNTLSSWEECQNFYQYCHLVIMSRPGILTYQKKYGFRLTNIINDLTKQKTGFIFFANNQMLNISSSTIQGKIKSQKNLSGLLPDSIINYINAL</sequence>
<accession>A5CX85</accession>
<gene>
    <name evidence="1" type="primary">nadD</name>
    <name type="ordered locus">COSY_0307</name>
</gene>
<comment type="function">
    <text evidence="1">Catalyzes the reversible adenylation of nicotinate mononucleotide (NaMN) to nicotinic acid adenine dinucleotide (NaAD).</text>
</comment>
<comment type="catalytic activity">
    <reaction evidence="1">
        <text>nicotinate beta-D-ribonucleotide + ATP + H(+) = deamido-NAD(+) + diphosphate</text>
        <dbReference type="Rhea" id="RHEA:22860"/>
        <dbReference type="ChEBI" id="CHEBI:15378"/>
        <dbReference type="ChEBI" id="CHEBI:30616"/>
        <dbReference type="ChEBI" id="CHEBI:33019"/>
        <dbReference type="ChEBI" id="CHEBI:57502"/>
        <dbReference type="ChEBI" id="CHEBI:58437"/>
        <dbReference type="EC" id="2.7.7.18"/>
    </reaction>
</comment>
<comment type="pathway">
    <text evidence="1">Cofactor biosynthesis; NAD(+) biosynthesis; deamido-NAD(+) from nicotinate D-ribonucleotide: step 1/1.</text>
</comment>
<comment type="similarity">
    <text evidence="1">Belongs to the NadD family.</text>
</comment>
<dbReference type="EC" id="2.7.7.18" evidence="1"/>
<dbReference type="EMBL" id="AP009247">
    <property type="protein sequence ID" value="BAF61434.1"/>
    <property type="molecule type" value="Genomic_DNA"/>
</dbReference>
<dbReference type="RefSeq" id="WP_011929704.1">
    <property type="nucleotide sequence ID" value="NC_009465.1"/>
</dbReference>
<dbReference type="SMR" id="A5CX85"/>
<dbReference type="STRING" id="412965.COSY_0307"/>
<dbReference type="KEGG" id="vok:COSY_0307"/>
<dbReference type="eggNOG" id="COG1057">
    <property type="taxonomic scope" value="Bacteria"/>
</dbReference>
<dbReference type="HOGENOM" id="CLU_069765_0_0_6"/>
<dbReference type="OrthoDB" id="5295945at2"/>
<dbReference type="UniPathway" id="UPA00253">
    <property type="reaction ID" value="UER00332"/>
</dbReference>
<dbReference type="Proteomes" id="UP000000247">
    <property type="component" value="Chromosome"/>
</dbReference>
<dbReference type="GO" id="GO:0005524">
    <property type="term" value="F:ATP binding"/>
    <property type="evidence" value="ECO:0007669"/>
    <property type="project" value="UniProtKB-KW"/>
</dbReference>
<dbReference type="GO" id="GO:0004515">
    <property type="term" value="F:nicotinate-nucleotide adenylyltransferase activity"/>
    <property type="evidence" value="ECO:0007669"/>
    <property type="project" value="UniProtKB-UniRule"/>
</dbReference>
<dbReference type="GO" id="GO:0009435">
    <property type="term" value="P:NAD biosynthetic process"/>
    <property type="evidence" value="ECO:0007669"/>
    <property type="project" value="UniProtKB-UniRule"/>
</dbReference>
<dbReference type="CDD" id="cd02165">
    <property type="entry name" value="NMNAT"/>
    <property type="match status" value="1"/>
</dbReference>
<dbReference type="Gene3D" id="3.40.50.620">
    <property type="entry name" value="HUPs"/>
    <property type="match status" value="1"/>
</dbReference>
<dbReference type="HAMAP" id="MF_00244">
    <property type="entry name" value="NaMN_adenylyltr"/>
    <property type="match status" value="1"/>
</dbReference>
<dbReference type="InterPro" id="IPR004821">
    <property type="entry name" value="Cyt_trans-like"/>
</dbReference>
<dbReference type="InterPro" id="IPR005248">
    <property type="entry name" value="NadD/NMNAT"/>
</dbReference>
<dbReference type="InterPro" id="IPR014729">
    <property type="entry name" value="Rossmann-like_a/b/a_fold"/>
</dbReference>
<dbReference type="NCBIfam" id="TIGR00125">
    <property type="entry name" value="cyt_tran_rel"/>
    <property type="match status" value="1"/>
</dbReference>
<dbReference type="NCBIfam" id="TIGR00482">
    <property type="entry name" value="nicotinate (nicotinamide) nucleotide adenylyltransferase"/>
    <property type="match status" value="1"/>
</dbReference>
<dbReference type="PANTHER" id="PTHR39321">
    <property type="entry name" value="NICOTINATE-NUCLEOTIDE ADENYLYLTRANSFERASE-RELATED"/>
    <property type="match status" value="1"/>
</dbReference>
<dbReference type="PANTHER" id="PTHR39321:SF3">
    <property type="entry name" value="PHOSPHOPANTETHEINE ADENYLYLTRANSFERASE"/>
    <property type="match status" value="1"/>
</dbReference>
<dbReference type="Pfam" id="PF01467">
    <property type="entry name" value="CTP_transf_like"/>
    <property type="match status" value="1"/>
</dbReference>
<dbReference type="SUPFAM" id="SSF52374">
    <property type="entry name" value="Nucleotidylyl transferase"/>
    <property type="match status" value="1"/>
</dbReference>
<organism>
    <name type="scientific">Vesicomyosocius okutanii subsp. Calyptogena okutanii (strain HA)</name>
    <dbReference type="NCBI Taxonomy" id="412965"/>
    <lineage>
        <taxon>Bacteria</taxon>
        <taxon>Pseudomonadati</taxon>
        <taxon>Pseudomonadota</taxon>
        <taxon>Gammaproteobacteria</taxon>
        <taxon>Candidatus Pseudothioglobaceae</taxon>
        <taxon>Candidatus Vesicomyosocius</taxon>
    </lineage>
</organism>
<reference key="1">
    <citation type="journal article" date="2007" name="Curr. Biol.">
        <title>Reduced genome of the thioautotrophic intracellular symbiont in a deep-sea clam, Calyptogena okutanii.</title>
        <authorList>
            <person name="Kuwahara H."/>
            <person name="Yoshida T."/>
            <person name="Takaki Y."/>
            <person name="Shimamura S."/>
            <person name="Nishi S."/>
            <person name="Harada M."/>
            <person name="Matsuyama K."/>
            <person name="Takishita K."/>
            <person name="Kawato M."/>
            <person name="Uematsu K."/>
            <person name="Fujiwara Y."/>
            <person name="Sato T."/>
            <person name="Kato C."/>
            <person name="Kitagawa M."/>
            <person name="Kato I."/>
            <person name="Maruyama T."/>
        </authorList>
    </citation>
    <scope>NUCLEOTIDE SEQUENCE [LARGE SCALE GENOMIC DNA]</scope>
    <source>
        <strain>HA</strain>
    </source>
</reference>
<evidence type="ECO:0000255" key="1">
    <source>
        <dbReference type="HAMAP-Rule" id="MF_00244"/>
    </source>
</evidence>
<feature type="chain" id="PRO_0000336748" description="Probable nicotinate-nucleotide adenylyltransferase">
    <location>
        <begin position="1"/>
        <end position="210"/>
    </location>
</feature>
<protein>
    <recommendedName>
        <fullName evidence="1">Probable nicotinate-nucleotide adenylyltransferase</fullName>
        <ecNumber evidence="1">2.7.7.18</ecNumber>
    </recommendedName>
    <alternativeName>
        <fullName evidence="1">Deamido-NAD(+) diphosphorylase</fullName>
    </alternativeName>
    <alternativeName>
        <fullName evidence="1">Deamido-NAD(+) pyrophosphorylase</fullName>
    </alternativeName>
    <alternativeName>
        <fullName evidence="1">Nicotinate mononucleotide adenylyltransferase</fullName>
        <shortName evidence="1">NaMN adenylyltransferase</shortName>
    </alternativeName>
</protein>
<proteinExistence type="inferred from homology"/>